<dbReference type="EMBL" id="CU329670">
    <property type="protein sequence ID" value="CAB90769.1"/>
    <property type="molecule type" value="Genomic_DNA"/>
</dbReference>
<dbReference type="RefSeq" id="NP_594061.1">
    <property type="nucleotide sequence ID" value="NM_001019485.2"/>
</dbReference>
<dbReference type="SMR" id="Q9P6M3"/>
<dbReference type="BioGRID" id="279902">
    <property type="interactions" value="9"/>
</dbReference>
<dbReference type="FunCoup" id="Q9P6M3">
    <property type="interactions" value="32"/>
</dbReference>
<dbReference type="IntAct" id="Q9P6M3">
    <property type="interactions" value="1"/>
</dbReference>
<dbReference type="STRING" id="284812.Q9P6M3"/>
<dbReference type="PaxDb" id="4896-SPAC688.02c.1"/>
<dbReference type="EnsemblFungi" id="SPAC688.02c.1">
    <property type="protein sequence ID" value="SPAC688.02c.1:pep"/>
    <property type="gene ID" value="SPAC688.02c"/>
</dbReference>
<dbReference type="GeneID" id="2543482"/>
<dbReference type="KEGG" id="spo:2543482"/>
<dbReference type="PomBase" id="SPAC688.02c">
    <property type="gene designation" value="mis14"/>
</dbReference>
<dbReference type="VEuPathDB" id="FungiDB:SPAC688.02c"/>
<dbReference type="eggNOG" id="ENOG502SA1D">
    <property type="taxonomic scope" value="Eukaryota"/>
</dbReference>
<dbReference type="HOGENOM" id="CLU_1240755_0_0_1"/>
<dbReference type="InParanoid" id="Q9P6M3"/>
<dbReference type="OMA" id="EVQRNWE"/>
<dbReference type="PhylomeDB" id="Q9P6M3"/>
<dbReference type="PRO" id="PR:Q9P6M3"/>
<dbReference type="Proteomes" id="UP000002485">
    <property type="component" value="Chromosome I"/>
</dbReference>
<dbReference type="GO" id="GO:0000779">
    <property type="term" value="C:condensed chromosome, centromeric region"/>
    <property type="evidence" value="ECO:0000314"/>
    <property type="project" value="PomBase"/>
</dbReference>
<dbReference type="GO" id="GO:0005829">
    <property type="term" value="C:cytosol"/>
    <property type="evidence" value="ECO:0007005"/>
    <property type="project" value="PomBase"/>
</dbReference>
<dbReference type="GO" id="GO:0000939">
    <property type="term" value="C:inner kinetochore"/>
    <property type="evidence" value="ECO:0000304"/>
    <property type="project" value="PomBase"/>
</dbReference>
<dbReference type="GO" id="GO:0000776">
    <property type="term" value="C:kinetochore"/>
    <property type="evidence" value="ECO:0000314"/>
    <property type="project" value="PomBase"/>
</dbReference>
<dbReference type="GO" id="GO:0000444">
    <property type="term" value="C:MIS12/MIND type complex"/>
    <property type="evidence" value="ECO:0000353"/>
    <property type="project" value="PomBase"/>
</dbReference>
<dbReference type="GO" id="GO:0005634">
    <property type="term" value="C:nucleus"/>
    <property type="evidence" value="ECO:0007005"/>
    <property type="project" value="PomBase"/>
</dbReference>
<dbReference type="GO" id="GO:0051301">
    <property type="term" value="P:cell division"/>
    <property type="evidence" value="ECO:0007669"/>
    <property type="project" value="UniProtKB-KW"/>
</dbReference>
<dbReference type="GO" id="GO:0051321">
    <property type="term" value="P:meiotic cell cycle"/>
    <property type="evidence" value="ECO:0007669"/>
    <property type="project" value="UniProtKB-KW"/>
</dbReference>
<dbReference type="GO" id="GO:0000070">
    <property type="term" value="P:mitotic sister chromatid segregation"/>
    <property type="evidence" value="ECO:0000305"/>
    <property type="project" value="PomBase"/>
</dbReference>
<dbReference type="InterPro" id="IPR013950">
    <property type="entry name" value="Mis14/Nsl1"/>
</dbReference>
<dbReference type="PANTHER" id="PTHR31749">
    <property type="entry name" value="KINETOCHORE-ASSOCIATED PROTEIN NSL1 HOMOLOG"/>
    <property type="match status" value="1"/>
</dbReference>
<dbReference type="PANTHER" id="PTHR31749:SF3">
    <property type="entry name" value="KINETOCHORE-ASSOCIATED PROTEIN NSL1 HOMOLOG"/>
    <property type="match status" value="1"/>
</dbReference>
<dbReference type="Pfam" id="PF08641">
    <property type="entry name" value="Mis14"/>
    <property type="match status" value="1"/>
</dbReference>
<accession>Q9P6M3</accession>
<keyword id="KW-0131">Cell cycle</keyword>
<keyword id="KW-0132">Cell division</keyword>
<keyword id="KW-0137">Centromere</keyword>
<keyword id="KW-0158">Chromosome</keyword>
<keyword id="KW-0995">Kinetochore</keyword>
<keyword id="KW-0469">Meiosis</keyword>
<keyword id="KW-0498">Mitosis</keyword>
<keyword id="KW-0539">Nucleus</keyword>
<keyword id="KW-1185">Reference proteome</keyword>
<evidence type="ECO:0000269" key="1">
    <source>
    </source>
</evidence>
<evidence type="ECO:0000269" key="2">
    <source>
    </source>
</evidence>
<evidence type="ECO:0000269" key="3">
    <source>
    </source>
</evidence>
<proteinExistence type="evidence at protein level"/>
<reference key="1">
    <citation type="journal article" date="2002" name="Nature">
        <title>The genome sequence of Schizosaccharomyces pombe.</title>
        <authorList>
            <person name="Wood V."/>
            <person name="Gwilliam R."/>
            <person name="Rajandream M.A."/>
            <person name="Lyne M.H."/>
            <person name="Lyne R."/>
            <person name="Stewart A."/>
            <person name="Sgouros J.G."/>
            <person name="Peat N."/>
            <person name="Hayles J."/>
            <person name="Baker S.G."/>
            <person name="Basham D."/>
            <person name="Bowman S."/>
            <person name="Brooks K."/>
            <person name="Brown D."/>
            <person name="Brown S."/>
            <person name="Chillingworth T."/>
            <person name="Churcher C.M."/>
            <person name="Collins M."/>
            <person name="Connor R."/>
            <person name="Cronin A."/>
            <person name="Davis P."/>
            <person name="Feltwell T."/>
            <person name="Fraser A."/>
            <person name="Gentles S."/>
            <person name="Goble A."/>
            <person name="Hamlin N."/>
            <person name="Harris D.E."/>
            <person name="Hidalgo J."/>
            <person name="Hodgson G."/>
            <person name="Holroyd S."/>
            <person name="Hornsby T."/>
            <person name="Howarth S."/>
            <person name="Huckle E.J."/>
            <person name="Hunt S."/>
            <person name="Jagels K."/>
            <person name="James K.D."/>
            <person name="Jones L."/>
            <person name="Jones M."/>
            <person name="Leather S."/>
            <person name="McDonald S."/>
            <person name="McLean J."/>
            <person name="Mooney P."/>
            <person name="Moule S."/>
            <person name="Mungall K.L."/>
            <person name="Murphy L.D."/>
            <person name="Niblett D."/>
            <person name="Odell C."/>
            <person name="Oliver K."/>
            <person name="O'Neil S."/>
            <person name="Pearson D."/>
            <person name="Quail M.A."/>
            <person name="Rabbinowitsch E."/>
            <person name="Rutherford K.M."/>
            <person name="Rutter S."/>
            <person name="Saunders D."/>
            <person name="Seeger K."/>
            <person name="Sharp S."/>
            <person name="Skelton J."/>
            <person name="Simmonds M.N."/>
            <person name="Squares R."/>
            <person name="Squares S."/>
            <person name="Stevens K."/>
            <person name="Taylor K."/>
            <person name="Taylor R.G."/>
            <person name="Tivey A."/>
            <person name="Walsh S.V."/>
            <person name="Warren T."/>
            <person name="Whitehead S."/>
            <person name="Woodward J.R."/>
            <person name="Volckaert G."/>
            <person name="Aert R."/>
            <person name="Robben J."/>
            <person name="Grymonprez B."/>
            <person name="Weltjens I."/>
            <person name="Vanstreels E."/>
            <person name="Rieger M."/>
            <person name="Schaefer M."/>
            <person name="Mueller-Auer S."/>
            <person name="Gabel C."/>
            <person name="Fuchs M."/>
            <person name="Duesterhoeft A."/>
            <person name="Fritzc C."/>
            <person name="Holzer E."/>
            <person name="Moestl D."/>
            <person name="Hilbert H."/>
            <person name="Borzym K."/>
            <person name="Langer I."/>
            <person name="Beck A."/>
            <person name="Lehrach H."/>
            <person name="Reinhardt R."/>
            <person name="Pohl T.M."/>
            <person name="Eger P."/>
            <person name="Zimmermann W."/>
            <person name="Wedler H."/>
            <person name="Wambutt R."/>
            <person name="Purnelle B."/>
            <person name="Goffeau A."/>
            <person name="Cadieu E."/>
            <person name="Dreano S."/>
            <person name="Gloux S."/>
            <person name="Lelaure V."/>
            <person name="Mottier S."/>
            <person name="Galibert F."/>
            <person name="Aves S.J."/>
            <person name="Xiang Z."/>
            <person name="Hunt C."/>
            <person name="Moore K."/>
            <person name="Hurst S.M."/>
            <person name="Lucas M."/>
            <person name="Rochet M."/>
            <person name="Gaillardin C."/>
            <person name="Tallada V.A."/>
            <person name="Garzon A."/>
            <person name="Thode G."/>
            <person name="Daga R.R."/>
            <person name="Cruzado L."/>
            <person name="Jimenez J."/>
            <person name="Sanchez M."/>
            <person name="del Rey F."/>
            <person name="Benito J."/>
            <person name="Dominguez A."/>
            <person name="Revuelta J.L."/>
            <person name="Moreno S."/>
            <person name="Armstrong J."/>
            <person name="Forsburg S.L."/>
            <person name="Cerutti L."/>
            <person name="Lowe T."/>
            <person name="McCombie W.R."/>
            <person name="Paulsen I."/>
            <person name="Potashkin J."/>
            <person name="Shpakovski G.V."/>
            <person name="Ussery D."/>
            <person name="Barrell B.G."/>
            <person name="Nurse P."/>
        </authorList>
    </citation>
    <scope>NUCLEOTIDE SEQUENCE [LARGE SCALE GENOMIC DNA]</scope>
    <source>
        <strain>972 / ATCC 24843</strain>
    </source>
</reference>
<reference key="2">
    <citation type="journal article" date="2004" name="Cell">
        <title>Mis16 and Mis18 are required for CENP-A loading and histone deacetylation at centromeres.</title>
        <authorList>
            <person name="Hayashi T."/>
            <person name="Fujita Y."/>
            <person name="Iwasaki O."/>
            <person name="Adachi Y."/>
            <person name="Takahashi K."/>
            <person name="Yanagida M."/>
        </authorList>
    </citation>
    <scope>FUNCTION</scope>
    <scope>INTERACTION WITH MIS12</scope>
    <scope>SUBCELLULAR LOCATION</scope>
</reference>
<reference key="3">
    <citation type="journal article" date="2005" name="EMBO J.">
        <title>Molecular analysis of kinetochore architecture in fission yeast.</title>
        <authorList>
            <person name="Liu X."/>
            <person name="McLeod I."/>
            <person name="Anderson S."/>
            <person name="Yates J.R. III"/>
            <person name="He X."/>
        </authorList>
    </citation>
    <scope>IDENTIFICATION IN THE NMS COMPLEX</scope>
</reference>
<reference key="4">
    <citation type="journal article" date="2006" name="Mol. Biol. Cell">
        <title>Reconstruction of the kinetochore during meiosis in fission yeast Schizosaccharomyces pombe.</title>
        <authorList>
            <person name="Hayashi A."/>
            <person name="Asakawa H."/>
            <person name="Haraguchi T."/>
            <person name="Hiraoka Y."/>
        </authorList>
    </citation>
    <scope>IDENTIFICATION IN THE NMS COMPLEX</scope>
</reference>
<reference key="5">
    <citation type="journal article" date="2006" name="Nat. Biotechnol.">
        <title>ORFeome cloning and global analysis of protein localization in the fission yeast Schizosaccharomyces pombe.</title>
        <authorList>
            <person name="Matsuyama A."/>
            <person name="Arai R."/>
            <person name="Yashiroda Y."/>
            <person name="Shirai A."/>
            <person name="Kamata A."/>
            <person name="Sekido S."/>
            <person name="Kobayashi Y."/>
            <person name="Hashimoto A."/>
            <person name="Hamamoto M."/>
            <person name="Hiraoka Y."/>
            <person name="Horinouchi S."/>
            <person name="Yoshida M."/>
        </authorList>
    </citation>
    <scope>SUBCELLULAR LOCATION [LARGE SCALE ANALYSIS]</scope>
</reference>
<gene>
    <name type="primary">mis14</name>
    <name type="ORF">SPAC688.02c</name>
</gene>
<organism>
    <name type="scientific">Schizosaccharomyces pombe (strain 972 / ATCC 24843)</name>
    <name type="common">Fission yeast</name>
    <dbReference type="NCBI Taxonomy" id="284812"/>
    <lineage>
        <taxon>Eukaryota</taxon>
        <taxon>Fungi</taxon>
        <taxon>Dikarya</taxon>
        <taxon>Ascomycota</taxon>
        <taxon>Taphrinomycotina</taxon>
        <taxon>Schizosaccharomycetes</taxon>
        <taxon>Schizosaccharomycetales</taxon>
        <taxon>Schizosaccharomycetaceae</taxon>
        <taxon>Schizosaccharomyces</taxon>
    </lineage>
</organism>
<name>MIS14_SCHPO</name>
<comment type="function">
    <text evidence="1">Acts as a component of the NMS (Ndc80-MIND-Spc7) super complex which has a role in kinetochore function during late meiotic prophase and throughout the mitotic cell cycle. Required for correct chromosome segregation where it has a role in the formation and/or maintenance of specialized chromatin at the centromere.</text>
</comment>
<comment type="subunit">
    <text evidence="1 2 3">Component of the NMS super complex which consists of mis12, mis13, mis14, ndc80, nnf1, nuf2, sos7, spc7, spc24 and spc25. Interacts with mis12.</text>
</comment>
<comment type="subcellular location">
    <subcellularLocation>
        <location>Nucleus</location>
    </subcellularLocation>
    <subcellularLocation>
        <location>Chromosome</location>
        <location>Centromere</location>
    </subcellularLocation>
    <subcellularLocation>
        <location>Chromosome</location>
        <location>Centromere</location>
        <location>Kinetochore</location>
    </subcellularLocation>
</comment>
<feature type="chain" id="PRO_0000278390" description="Kinetochore protein mis14">
    <location>
        <begin position="1"/>
        <end position="210"/>
    </location>
</feature>
<protein>
    <recommendedName>
        <fullName>Kinetochore protein mis14</fullName>
    </recommendedName>
    <alternativeName>
        <fullName>NMS complex subunit mis14</fullName>
    </alternativeName>
</protein>
<sequence>MSSHGDASVLPKIALESINDYSYVKSVFRQAIQEKLAIHLPEQASREAGMGREDQLRIRVKEMLNELIESTFSIIQENVTINGFDANSALQDPKNSDQIEPFDLALRTRVQQLFNEVEDAHVLVARYRKSVPAQYEKAYVDAMEQQTAFLRNVKDDYVSLQDKEVENPDEQTSTTVFRKEDIDRYEQTIAKVAYLKKNLPRVVARLEKTP</sequence>